<protein>
    <recommendedName>
        <fullName>Cyclic nucleotide-gated channel beta-3</fullName>
        <shortName>CNG channel beta-3</shortName>
    </recommendedName>
    <alternativeName>
        <fullName>Cone photoreceptor cGMP-gated channel subunit beta</fullName>
    </alternativeName>
    <alternativeName>
        <fullName>Cyclic nucleotide-gated cation channel beta-3</fullName>
    </alternativeName>
    <alternativeName>
        <fullName>Cyclic nucleotide-gated cation channel modulatory subunit</fullName>
    </alternativeName>
</protein>
<evidence type="ECO:0000250" key="1">
    <source>
        <dbReference type="UniProtKB" id="Q28181"/>
    </source>
</evidence>
<evidence type="ECO:0000255" key="2"/>
<evidence type="ECO:0000256" key="3">
    <source>
        <dbReference type="SAM" id="MobiDB-lite"/>
    </source>
</evidence>
<evidence type="ECO:0000269" key="4">
    <source>
    </source>
</evidence>
<evidence type="ECO:0000269" key="5">
    <source>
    </source>
</evidence>
<evidence type="ECO:0000269" key="6">
    <source>
    </source>
</evidence>
<evidence type="ECO:0000269" key="7">
    <source>
    </source>
</evidence>
<evidence type="ECO:0000269" key="8">
    <source>
    </source>
</evidence>
<evidence type="ECO:0000269" key="9">
    <source>
    </source>
</evidence>
<evidence type="ECO:0000269" key="10">
    <source>
    </source>
</evidence>
<evidence type="ECO:0000269" key="11">
    <source>
    </source>
</evidence>
<evidence type="ECO:0000269" key="12">
    <source>
    </source>
</evidence>
<evidence type="ECO:0000269" key="13">
    <source>
    </source>
</evidence>
<evidence type="ECO:0000303" key="14">
    <source>
    </source>
</evidence>
<evidence type="ECO:0000303" key="15">
    <source>
    </source>
</evidence>
<evidence type="ECO:0000305" key="16"/>
<evidence type="ECO:0000305" key="17">
    <source>
    </source>
</evidence>
<evidence type="ECO:0000305" key="18">
    <source>
    </source>
</evidence>
<evidence type="ECO:0007744" key="19">
    <source>
        <dbReference type="PDB" id="7RHS"/>
    </source>
</evidence>
<evidence type="ECO:0007744" key="20">
    <source>
        <dbReference type="PDB" id="8EUC"/>
    </source>
</evidence>
<evidence type="ECO:0007829" key="21">
    <source>
        <dbReference type="PDB" id="7RHS"/>
    </source>
</evidence>
<evidence type="ECO:0007829" key="22">
    <source>
        <dbReference type="PDB" id="8EV9"/>
    </source>
</evidence>
<proteinExistence type="evidence at protein level"/>
<name>CNGB3_HUMAN</name>
<accession>Q9NQW8</accession>
<accession>C9JA51</accession>
<accession>Q9NRE9</accession>
<sequence length="809" mass="92167">MFKSLTKVNKVKPIGENNENEQSSRRNEEGSHPSNQSQQTTAQEENKGEEKSLKTKSTPVTSEEPHTNIQDKLSKKNSSGDLTTNPDPQNAAEPTGTVPEQKEMDPGKEGPNSPQNKPPAAPVINEYADAQLHNLVKRMRQRTALYKKKLVEGDLSSPEASPQTAKPTAVPPVKESDDKPTEHYYRLLWFKVKKMPLTEYLKRIKLPNSIDSYTDRLYLLWLLLVTLAYNWNCCFIPLRLVFPYQTADNIHYWLIADIICDIIYLYDMLFIQPRLQFVRGGDIIVDSNELRKHYRTSTKFQLDVASIIPFDICYLFFGFNPMFRANRMLKYTSFFEFNHHLESIMDKAYIYRVIRTTGYLLFILHINACVYYWASNYEGIGTTRWVYDGEGNEYLRCYYWAVRTLITIGGLPEPQTLFEIVFQLLNFFSGVFVFSSLIGQMRDVIGAATANQNYFRACMDDTIAYMNNYSIPKLVQKRVRTWYEYTWDSQRMLDESDLLKTLPTTVQLALAIDVNFSIISKVDLFKGCDTQMIYDMLLRLKSVLYLPGDFVCKKGEIGKEMYIIKHGEVQVLGGPDGTKVLVTLKAGSVFGEISLLAAGGGNRRTANVVAHGFANLLTLDKKTLQEILVHYPDSERILMKKARVLLKQKAKTAEATPPRKDLALLFPPKEETPKLFKTLLGGTGKASLARLLKLKREQAAQKKENSEGGEEEGKENEDKQKENEDKQKENEDKGKENEDKDKGREPEEKPLDRPECTASPIAVEEEPHSVRRTVLPRGTSRQSLIISMAPSAEGGEEVLTIEVKEKAKQ</sequence>
<comment type="function">
    <text evidence="4 7 12 13">Pore-forming subunit of the cone cyclic nucleotide-gated channel. Mediates cone photoresponses at bright light converting transient changes in intracellular cGMP levels into electrical signals. In the dark, cGMP levels are high and keep the channel open enabling a steady inward current carried by Na(+) and Ca(2+) ions that leads to membrane depolarization and neurotransmitter release from synaptic terminals. Upon photon absorption cGMP levels decline leading to channel closure and membrane hyperpolarization that ultimately slows neurotransmitter release and signals the presence of light, the end point of the phototransduction cascade. Conducts cGMP- and cAMP-gated ion currents, with permeability for monovalent and divalent cations.</text>
</comment>
<comment type="catalytic activity">
    <reaction evidence="1">
        <text>Ca(2+)(in) = Ca(2+)(out)</text>
        <dbReference type="Rhea" id="RHEA:29671"/>
        <dbReference type="ChEBI" id="CHEBI:29108"/>
    </reaction>
</comment>
<comment type="catalytic activity">
    <reaction evidence="7">
        <text>Na(+)(in) = Na(+)(out)</text>
        <dbReference type="Rhea" id="RHEA:34963"/>
        <dbReference type="ChEBI" id="CHEBI:29101"/>
    </reaction>
</comment>
<comment type="catalytic activity">
    <reaction evidence="7">
        <text>K(+)(in) = K(+)(out)</text>
        <dbReference type="Rhea" id="RHEA:29463"/>
        <dbReference type="ChEBI" id="CHEBI:29103"/>
    </reaction>
</comment>
<comment type="catalytic activity">
    <reaction evidence="7">
        <text>NH4(+)(in) = NH4(+)(out)</text>
        <dbReference type="Rhea" id="RHEA:28747"/>
        <dbReference type="ChEBI" id="CHEBI:28938"/>
    </reaction>
</comment>
<comment type="catalytic activity">
    <reaction evidence="7">
        <text>Rb(+)(in) = Rb(+)(out)</text>
        <dbReference type="Rhea" id="RHEA:78547"/>
        <dbReference type="ChEBI" id="CHEBI:49847"/>
    </reaction>
</comment>
<comment type="catalytic activity">
    <reaction evidence="7">
        <text>Li(+)(in) = Li(+)(out)</text>
        <dbReference type="Rhea" id="RHEA:78551"/>
        <dbReference type="ChEBI" id="CHEBI:49713"/>
    </reaction>
</comment>
<comment type="catalytic activity">
    <reaction evidence="7">
        <text>Cs(+)(in) = Cs(+)(out)</text>
        <dbReference type="Rhea" id="RHEA:78555"/>
        <dbReference type="ChEBI" id="CHEBI:49547"/>
    </reaction>
</comment>
<comment type="subunit">
    <text evidence="4 11 12">Forms heterotetrameric channels composed of CNGA3 and CNGB3 subunits with 3:1 stoichiometry.</text>
</comment>
<comment type="subcellular location">
    <subcellularLocation>
        <location evidence="7">Cell membrane</location>
        <topology evidence="2">Multi-pass membrane protein</topology>
    </subcellularLocation>
</comment>
<comment type="alternative products">
    <event type="alternative splicing"/>
    <isoform>
        <id>Q9NQW8-1</id>
        <name>1</name>
        <sequence type="displayed"/>
    </isoform>
    <isoform>
        <id>Q9NQW8-2</id>
        <name>2</name>
        <sequence type="described" ref="VSP_009742"/>
    </isoform>
</comment>
<comment type="tissue specificity">
    <text evidence="5">Expressed specifically in the retina.</text>
</comment>
<comment type="domain">
    <text evidence="13">The cyclic nucleotide-binding domain (CNBD) comprises three helices and a beta-roll of eight beta-strands from CNGA3 and CNGB3 subunits. Upon cNMP binding transmits the conformational changes to the C-linker domain of the S6 helix to open the ion conduction pathway.</text>
</comment>
<comment type="domain">
    <text evidence="12">The ion conduction pathway consists of S5, S6 and pore helices from CNGA3 and CNGB3 subunits. It contains a central hydrophobic gate that opens upon cNMP binding. CNGB1 displays an additional charged arginine gate below the central gate to regulate ion permeation.</text>
</comment>
<comment type="disease" evidence="10">
    <disease id="DI-01084">
        <name>Stargardt disease 1</name>
        <acronym>STGD1</acronym>
        <description>An autosomal recessive form of Stargardt disease, a retinal degenerative disease characterized by macular dystrophy, progressive bilateral atrophy of the foveal retinal pigment epithelium, and accumulation of fluorescent flecks around the macula and/or in the central and near-peripheral areas of the retina. STGD1 patients typically lose central vision in their first or second decade of life.</description>
        <dbReference type="MIM" id="248200"/>
    </disease>
    <text>The disease is caused by variants affecting the gene represented in this entry.</text>
</comment>
<comment type="disease" evidence="4 5 6 7 8 9 10">
    <disease id="DI-00023">
        <name>Achromatopsia 3</name>
        <acronym>ACHM3</acronym>
        <description>An autosomal recessive, ocular stationary disorder due to the absence of functioning cone photoreceptors in the retina. It is characterized by total colorblindness, low visual acuity, photophobia and nystagmus. Achromatopsia type 3 patients manifest severe myopia.</description>
        <dbReference type="MIM" id="262300"/>
    </disease>
    <text>The disease is caused by variants affecting the gene represented in this entry.</text>
</comment>
<comment type="similarity">
    <text evidence="16">Belongs to the cyclic nucleotide-gated cation channel (TC 1.A.1.5) family. CNGB3 subfamily.</text>
</comment>
<comment type="sequence caution" evidence="16">
    <conflict type="erroneous initiation">
        <sequence resource="EMBL-CDS" id="AAF80179"/>
    </conflict>
    <text>Truncated N-terminus.</text>
</comment>
<feature type="chain" id="PRO_0000219320" description="Cyclic nucleotide-gated channel beta-3">
    <location>
        <begin position="1"/>
        <end position="809"/>
    </location>
</feature>
<feature type="topological domain" description="Cytoplasmic" evidence="16">
    <location>
        <begin position="1"/>
        <end position="218"/>
    </location>
</feature>
<feature type="transmembrane region" description="Helical; Name=S1" evidence="12 19">
    <location>
        <begin position="219"/>
        <end position="242"/>
    </location>
</feature>
<feature type="topological domain" description="Extracellular" evidence="16">
    <location>
        <begin position="243"/>
        <end position="249"/>
    </location>
</feature>
<feature type="transmembrane region" description="Helical; Name=S2" evidence="12 19">
    <location>
        <begin position="250"/>
        <end position="270"/>
    </location>
</feature>
<feature type="topological domain" description="Cytoplasmic" evidence="16">
    <location>
        <begin position="271"/>
        <end position="299"/>
    </location>
</feature>
<feature type="transmembrane region" description="Helical; Name=S3" evidence="12 19">
    <location>
        <begin position="300"/>
        <end position="317"/>
    </location>
</feature>
<feature type="topological domain" description="Extracellular" evidence="16">
    <location>
        <begin position="318"/>
        <end position="320"/>
    </location>
</feature>
<feature type="transmembrane region" description="Helical; Name=S4" evidence="12 19">
    <location>
        <begin position="321"/>
        <end position="335"/>
    </location>
</feature>
<feature type="topological domain" description="Cytoplasmic" evidence="16">
    <location>
        <begin position="336"/>
        <end position="348"/>
    </location>
</feature>
<feature type="transmembrane region" description="Helical; Name=S5" evidence="12 19">
    <location>
        <begin position="349"/>
        <end position="371"/>
    </location>
</feature>
<feature type="topological domain" description="Extracellular" evidence="16">
    <location>
        <begin position="372"/>
        <end position="393"/>
    </location>
</feature>
<feature type="transmembrane region" description="Helical; Name=P-helix" evidence="12 19">
    <location>
        <begin position="394"/>
        <end position="420"/>
    </location>
</feature>
<feature type="transmembrane region" description="Helical; Name=S6" evidence="12 19">
    <location>
        <begin position="421"/>
        <end position="445"/>
    </location>
</feature>
<feature type="topological domain" description="Cytoplasmic" evidence="16">
    <location>
        <begin position="446"/>
        <end position="809"/>
    </location>
</feature>
<feature type="region of interest" description="Disordered" evidence="3">
    <location>
        <begin position="1"/>
        <end position="121"/>
    </location>
</feature>
<feature type="region of interest" description="Disordered" evidence="3">
    <location>
        <begin position="153"/>
        <end position="178"/>
    </location>
</feature>
<feature type="region of interest" description="Ion conduction pathway" evidence="17">
    <location>
        <begin position="348"/>
        <end position="447"/>
    </location>
</feature>
<feature type="region of interest" description="Selectivity filter" evidence="17">
    <location>
        <begin position="407"/>
        <end position="410"/>
    </location>
</feature>
<feature type="region of interest" description="C-linker" evidence="17">
    <location>
        <begin position="450"/>
        <end position="526"/>
    </location>
</feature>
<feature type="region of interest" description="Cyclic nucleotide-binding domain" evidence="17 18 20">
    <location>
        <begin position="530"/>
        <end position="646"/>
    </location>
</feature>
<feature type="region of interest" description="Disordered" evidence="3">
    <location>
        <begin position="698"/>
        <end position="776"/>
    </location>
</feature>
<feature type="compositionally biased region" description="Basic and acidic residues" evidence="3">
    <location>
        <begin position="22"/>
        <end position="31"/>
    </location>
</feature>
<feature type="compositionally biased region" description="Polar residues" evidence="3">
    <location>
        <begin position="32"/>
        <end position="43"/>
    </location>
</feature>
<feature type="compositionally biased region" description="Basic and acidic residues" evidence="3">
    <location>
        <begin position="44"/>
        <end position="53"/>
    </location>
</feature>
<feature type="compositionally biased region" description="Polar residues" evidence="3">
    <location>
        <begin position="55"/>
        <end position="88"/>
    </location>
</feature>
<feature type="compositionally biased region" description="Basic and acidic residues" evidence="3">
    <location>
        <begin position="716"/>
        <end position="755"/>
    </location>
</feature>
<feature type="binding site" evidence="13 20">
    <location>
        <position position="591"/>
    </location>
    <ligand>
        <name>3',5'-cyclic GMP</name>
        <dbReference type="ChEBI" id="CHEBI:57746"/>
    </ligand>
</feature>
<feature type="binding site" evidence="13 20">
    <location>
        <position position="592"/>
    </location>
    <ligand>
        <name>3',5'-cyclic GMP</name>
        <dbReference type="ChEBI" id="CHEBI:57746"/>
    </ligand>
</feature>
<feature type="binding site" evidence="13 20">
    <location>
        <position position="604"/>
    </location>
    <ligand>
        <name>3',5'-cyclic GMP</name>
        <dbReference type="ChEBI" id="CHEBI:57746"/>
    </ligand>
</feature>
<feature type="binding site" evidence="13 20">
    <location>
        <position position="605"/>
    </location>
    <ligand>
        <name>3',5'-cyclic GMP</name>
        <dbReference type="ChEBI" id="CHEBI:57746"/>
    </ligand>
</feature>
<feature type="site" description="Central gate" evidence="17">
    <location>
        <position position="434"/>
    </location>
</feature>
<feature type="site" description="Central gate" evidence="17">
    <location>
        <position position="438"/>
    </location>
</feature>
<feature type="site" description="Occludes the pore below the central gate" evidence="17">
    <location>
        <position position="442"/>
    </location>
</feature>
<feature type="splice variant" id="VSP_009742" description="In isoform 2." evidence="14">
    <location>
        <begin position="590"/>
        <end position="594"/>
    </location>
</feature>
<feature type="sequence variant" id="VAR_047606" description="In dbSNP:rs141098074." evidence="10">
    <original>R</original>
    <variation>H</variation>
    <location>
        <position position="25"/>
    </location>
</feature>
<feature type="sequence variant" id="VAR_047607" description="In dbSNP:rs35807406." evidence="10">
    <original>N</original>
    <variation>S</variation>
    <location>
        <position position="27"/>
    </location>
</feature>
<feature type="sequence variant" id="VAR_047608" description="In ACHM3; uncertain significance; dbSNP:rs146688972." evidence="10">
    <original>G</original>
    <variation>R</variation>
    <location>
        <position position="107"/>
    </location>
</feature>
<feature type="sequence variant" id="VAR_047609" description="In ACHM3; dbSNP:rs369138501." evidence="6">
    <original>K</original>
    <variation>E</variation>
    <location>
        <position position="148"/>
    </location>
</feature>
<feature type="sequence variant" id="VAR_047610" description="In ACHM3; dbSNP:rs139207764." evidence="9">
    <original>S</original>
    <variation>F</variation>
    <location>
        <position position="156"/>
    </location>
</feature>
<feature type="sequence variant" id="VAR_047611" description="In ACHM3; uncertain significance; dbSNP:rs114305748." evidence="10">
    <original>E</original>
    <variation>K</variation>
    <location>
        <position position="199"/>
    </location>
</feature>
<feature type="sequence variant" id="VAR_025524" description="In dbSNP:rs16916632." evidence="10">
    <original>R</original>
    <variation>Q</variation>
    <location>
        <position position="203"/>
    </location>
</feature>
<feature type="sequence variant" id="VAR_018109" description="In dbSNP:rs6471482." evidence="5">
    <original>C</original>
    <variation>W</variation>
    <location>
        <position position="234"/>
    </location>
</feature>
<feature type="sequence variant" id="VAR_018110" description="In dbSNP:rs4961206." evidence="5 10">
    <original>T</original>
    <variation>P</variation>
    <location>
        <position position="298"/>
    </location>
</feature>
<feature type="sequence variant" id="VAR_024418" description="In dbSNP:rs13265557." evidence="8 10">
    <original>I</original>
    <variation>V</variation>
    <location>
        <position position="307"/>
    </location>
</feature>
<feature type="sequence variant" id="VAR_047612" description="In ACHM3; dbSNP:rs1554612145." evidence="9">
    <original>P</original>
    <variation>L</variation>
    <location>
        <position position="309"/>
    </location>
</feature>
<feature type="sequence variant" id="VAR_047613" description="Found in macular degeneration; uncertain significance; dbSNP:rs147876778." evidence="10">
    <original>R</original>
    <variation>Q</variation>
    <location>
        <position position="403"/>
    </location>
</feature>
<feature type="sequence variant" id="VAR_018111" description="In ACHM3; does not affect channel assembly but significantly decreases trafficking to the cell membrane; results in increased affinity for cAMP and cGMP and reduced steady state channel rectification; increases channel open probability but decreases channel conductance; modulates selectivity toward monovalent ions, with relative permeability for Na(+) &gt; K(+) &gt; Rb(+) &gt; Li(+) &gt; Cs(+); increases sensitivity to L-cis diltiazem; dbSNP:rs121918344." evidence="4 5 7 9">
    <original>S</original>
    <variation>F</variation>
    <location>
        <position position="435"/>
    </location>
</feature>
<feature type="sequence variant" id="VAR_047614" description="In ACHM3; uncertain significance; dbSNP:rs35010099." evidence="10">
    <original>M</original>
    <variation>T</variation>
    <location>
        <position position="466"/>
    </location>
</feature>
<feature type="sequence variant" id="VAR_047615" description="In STGD1; dbSNP:rs35365413." evidence="10">
    <original>Y</original>
    <variation>D</variation>
    <location>
        <position position="469"/>
    </location>
</feature>
<feature type="sequence variant" id="VAR_047616" description="In ACHM3; uncertain significance; dbSNP:rs1209920077." evidence="10">
    <original>D</original>
    <variation>N</variation>
    <location>
        <position position="494"/>
    </location>
</feature>
<feature type="sequence variant" id="VAR_047617" description="In ACHM3; uncertain significance; dbSNP:rs765884344." evidence="10">
    <original>D</original>
    <variation>Y</variation>
    <location>
        <position position="513"/>
    </location>
</feature>
<feature type="sequence variant" id="VAR_047618" description="In ACHM3; requires 2 nucleotide substitutions." evidence="8">
    <original>F</original>
    <variation>N</variation>
    <location>
        <position position="525"/>
    </location>
</feature>
<feature type="sequence variant" id="VAR_047619" description="In ACHM3; dbSNP:rs749413012." evidence="10">
    <original>G</original>
    <variation>C</variation>
    <location>
        <position position="558"/>
    </location>
</feature>
<feature type="sequence variant" id="VAR_047620" description="In ACHM3; dbSNP:rs1554604849." evidence="10">
    <original>L</original>
    <variation>F</variation>
    <location>
        <position position="595"/>
    </location>
</feature>
<feature type="sequence variant" id="VAR_047621" description="In ACHM3; uncertain significance." evidence="10">
    <original>T</original>
    <variation>P</variation>
    <location>
        <position position="672"/>
    </location>
</feature>
<feature type="sequence variant" id="VAR_047622" description="In ACHM3." evidence="9">
    <location>
        <begin position="720"/>
        <end position="726"/>
    </location>
</feature>
<feature type="sequence variant" id="VAR_025525" description="In dbSNP:rs3735971.">
    <original>P</original>
    <variation>S</variation>
    <location>
        <position position="750"/>
    </location>
</feature>
<feature type="sequence variant" id="VAR_018112" description="In dbSNP:rs3735972." evidence="5 10">
    <original>E</original>
    <variation>G</variation>
    <location>
        <position position="755"/>
    </location>
</feature>
<feature type="strand" evidence="21">
    <location>
        <begin position="208"/>
        <end position="210"/>
    </location>
</feature>
<feature type="strand" evidence="21">
    <location>
        <begin position="212"/>
        <end position="214"/>
    </location>
</feature>
<feature type="helix" evidence="21">
    <location>
        <begin position="216"/>
        <end position="241"/>
    </location>
</feature>
<feature type="turn" evidence="21">
    <location>
        <begin position="247"/>
        <end position="249"/>
    </location>
</feature>
<feature type="helix" evidence="21">
    <location>
        <begin position="250"/>
        <end position="270"/>
    </location>
</feature>
<feature type="helix" evidence="21">
    <location>
        <begin position="272"/>
        <end position="274"/>
    </location>
</feature>
<feature type="strand" evidence="21">
    <location>
        <begin position="277"/>
        <end position="279"/>
    </location>
</feature>
<feature type="strand" evidence="21">
    <location>
        <begin position="282"/>
        <end position="284"/>
    </location>
</feature>
<feature type="helix" evidence="21">
    <location>
        <begin position="287"/>
        <end position="295"/>
    </location>
</feature>
<feature type="helix" evidence="21">
    <location>
        <begin position="299"/>
        <end position="306"/>
    </location>
</feature>
<feature type="helix" evidence="21">
    <location>
        <begin position="310"/>
        <end position="314"/>
    </location>
</feature>
<feature type="helix" evidence="21">
    <location>
        <begin position="321"/>
        <end position="329"/>
    </location>
</feature>
<feature type="helix" evidence="21">
    <location>
        <begin position="331"/>
        <end position="344"/>
    </location>
</feature>
<feature type="helix" evidence="21">
    <location>
        <begin position="348"/>
        <end position="378"/>
    </location>
</feature>
<feature type="strand" evidence="21">
    <location>
        <begin position="382"/>
        <end position="386"/>
    </location>
</feature>
<feature type="strand" evidence="21">
    <location>
        <begin position="389"/>
        <end position="391"/>
    </location>
</feature>
<feature type="helix" evidence="21">
    <location>
        <begin position="393"/>
        <end position="405"/>
    </location>
</feature>
<feature type="helix" evidence="21">
    <location>
        <begin position="417"/>
        <end position="448"/>
    </location>
</feature>
<feature type="helix" evidence="21">
    <location>
        <begin position="450"/>
        <end position="468"/>
    </location>
</feature>
<feature type="helix" evidence="21">
    <location>
        <begin position="473"/>
        <end position="489"/>
    </location>
</feature>
<feature type="strand" evidence="21">
    <location>
        <begin position="491"/>
        <end position="493"/>
    </location>
</feature>
<feature type="helix" evidence="21">
    <location>
        <begin position="496"/>
        <end position="499"/>
    </location>
</feature>
<feature type="helix" evidence="21">
    <location>
        <begin position="504"/>
        <end position="520"/>
    </location>
</feature>
<feature type="strand" evidence="21">
    <location>
        <begin position="523"/>
        <end position="528"/>
    </location>
</feature>
<feature type="helix" evidence="21">
    <location>
        <begin position="530"/>
        <end position="538"/>
    </location>
</feature>
<feature type="strand" evidence="21">
    <location>
        <begin position="541"/>
        <end position="545"/>
    </location>
</feature>
<feature type="strand" evidence="21">
    <location>
        <begin position="550"/>
        <end position="552"/>
    </location>
</feature>
<feature type="strand" evidence="21">
    <location>
        <begin position="560"/>
        <end position="564"/>
    </location>
</feature>
<feature type="strand" evidence="21">
    <location>
        <begin position="569"/>
        <end position="572"/>
    </location>
</feature>
<feature type="strand" evidence="21">
    <location>
        <begin position="574"/>
        <end position="577"/>
    </location>
</feature>
<feature type="strand" evidence="21">
    <location>
        <begin position="579"/>
        <end position="584"/>
    </location>
</feature>
<feature type="strand" evidence="21">
    <location>
        <begin position="588"/>
        <end position="590"/>
    </location>
</feature>
<feature type="helix" evidence="21">
    <location>
        <begin position="593"/>
        <end position="595"/>
    </location>
</feature>
<feature type="strand" evidence="22">
    <location>
        <begin position="596"/>
        <end position="600"/>
    </location>
</feature>
<feature type="strand" evidence="21">
    <location>
        <begin position="606"/>
        <end position="612"/>
    </location>
</feature>
<feature type="strand" evidence="21">
    <location>
        <begin position="614"/>
        <end position="620"/>
    </location>
</feature>
<feature type="helix" evidence="21">
    <location>
        <begin position="621"/>
        <end position="628"/>
    </location>
</feature>
<feature type="helix" evidence="21">
    <location>
        <begin position="632"/>
        <end position="645"/>
    </location>
</feature>
<keyword id="KW-0002">3D-structure</keyword>
<keyword id="KW-0025">Alternative splicing</keyword>
<keyword id="KW-1003">Cell membrane</keyword>
<keyword id="KW-0140">cGMP</keyword>
<keyword id="KW-0142">cGMP-binding</keyword>
<keyword id="KW-0225">Disease variant</keyword>
<keyword id="KW-0407">Ion channel</keyword>
<keyword id="KW-0406">Ion transport</keyword>
<keyword id="KW-1071">Ligand-gated ion channel</keyword>
<keyword id="KW-0472">Membrane</keyword>
<keyword id="KW-0547">Nucleotide-binding</keyword>
<keyword id="KW-1185">Reference proteome</keyword>
<keyword id="KW-0716">Sensory transduction</keyword>
<keyword id="KW-0751">Stargardt disease</keyword>
<keyword id="KW-0812">Transmembrane</keyword>
<keyword id="KW-1133">Transmembrane helix</keyword>
<keyword id="KW-0813">Transport</keyword>
<keyword id="KW-0844">Vision</keyword>
<reference key="1">
    <citation type="journal article" date="2000" name="Hum. Mol. Genet.">
        <title>Mutations in the CNGB3 gene encoding the beta-subunit of the cone photoreceptor cGMP-gated channel are responsible for achromatopsia (ACHM3) linked to chromosome 8Q21.</title>
        <authorList>
            <person name="Kohl S."/>
            <person name="Baumann B."/>
            <person name="Broghammer M."/>
            <person name="Jaegle H."/>
            <person name="Sieving P."/>
            <person name="Kellner U."/>
            <person name="Spegal R."/>
            <person name="Anastasi M."/>
            <person name="Zrenner E."/>
            <person name="Sharpe L.T."/>
            <person name="Wissinger B."/>
        </authorList>
    </citation>
    <scope>NUCLEOTIDE SEQUENCE [MRNA] (ISOFORM 1)</scope>
    <scope>TISSUE SPECIFICITY</scope>
    <scope>VARIANT ACHM3 PHE-435</scope>
    <scope>VARIANTS TRP-234; PRO-298 AND GLY-755</scope>
</reference>
<reference key="2">
    <citation type="journal article" date="2006" name="Nature">
        <title>DNA sequence and analysis of human chromosome 8.</title>
        <authorList>
            <person name="Nusbaum C."/>
            <person name="Mikkelsen T.S."/>
            <person name="Zody M.C."/>
            <person name="Asakawa S."/>
            <person name="Taudien S."/>
            <person name="Garber M."/>
            <person name="Kodira C.D."/>
            <person name="Schueler M.G."/>
            <person name="Shimizu A."/>
            <person name="Whittaker C.A."/>
            <person name="Chang J.L."/>
            <person name="Cuomo C.A."/>
            <person name="Dewar K."/>
            <person name="FitzGerald M.G."/>
            <person name="Yang X."/>
            <person name="Allen N.R."/>
            <person name="Anderson S."/>
            <person name="Asakawa T."/>
            <person name="Blechschmidt K."/>
            <person name="Bloom T."/>
            <person name="Borowsky M.L."/>
            <person name="Butler J."/>
            <person name="Cook A."/>
            <person name="Corum B."/>
            <person name="DeArellano K."/>
            <person name="DeCaprio D."/>
            <person name="Dooley K.T."/>
            <person name="Dorris L. III"/>
            <person name="Engels R."/>
            <person name="Gloeckner G."/>
            <person name="Hafez N."/>
            <person name="Hagopian D.S."/>
            <person name="Hall J.L."/>
            <person name="Ishikawa S.K."/>
            <person name="Jaffe D.B."/>
            <person name="Kamat A."/>
            <person name="Kudoh J."/>
            <person name="Lehmann R."/>
            <person name="Lokitsang T."/>
            <person name="Macdonald P."/>
            <person name="Major J.E."/>
            <person name="Matthews C.D."/>
            <person name="Mauceli E."/>
            <person name="Menzel U."/>
            <person name="Mihalev A.H."/>
            <person name="Minoshima S."/>
            <person name="Murayama Y."/>
            <person name="Naylor J.W."/>
            <person name="Nicol R."/>
            <person name="Nguyen C."/>
            <person name="O'Leary S.B."/>
            <person name="O'Neill K."/>
            <person name="Parker S.C.J."/>
            <person name="Polley A."/>
            <person name="Raymond C.K."/>
            <person name="Reichwald K."/>
            <person name="Rodriguez J."/>
            <person name="Sasaki T."/>
            <person name="Schilhabel M."/>
            <person name="Siddiqui R."/>
            <person name="Smith C.L."/>
            <person name="Sneddon T.P."/>
            <person name="Talamas J.A."/>
            <person name="Tenzin P."/>
            <person name="Topham K."/>
            <person name="Venkataraman V."/>
            <person name="Wen G."/>
            <person name="Yamazaki S."/>
            <person name="Young S.K."/>
            <person name="Zeng Q."/>
            <person name="Zimmer A.R."/>
            <person name="Rosenthal A."/>
            <person name="Birren B.W."/>
            <person name="Platzer M."/>
            <person name="Shimizu N."/>
            <person name="Lander E.S."/>
        </authorList>
    </citation>
    <scope>NUCLEOTIDE SEQUENCE [LARGE SCALE GENOMIC DNA]</scope>
</reference>
<reference key="3">
    <citation type="journal article" date="2000" name="Nat. Genet.">
        <title>Genetic basis of total colourblindness among the Pingelapese islanders.</title>
        <authorList>
            <person name="Sundin O.H."/>
            <person name="Yang J.-M."/>
            <person name="Li Y."/>
            <person name="Zhu D."/>
            <person name="Hurd J.N."/>
            <person name="Mitchell T.N."/>
            <person name="Silva E.D."/>
            <person name="Maumenee I.H."/>
        </authorList>
    </citation>
    <scope>NUCLEOTIDE SEQUENCE [MRNA] OF 114-809 (ISOFORM 2)</scope>
    <scope>FUNCTION</scope>
    <scope>SUBUNIT</scope>
    <scope>VARIANT ACHM3 PHE-435</scope>
    <source>
        <tissue>Retina</tissue>
    </source>
</reference>
<reference key="4">
    <citation type="journal article" date="2001" name="Science">
        <title>Nomenclature for ion channel subunits.</title>
        <authorList>
            <person name="Bradley J."/>
            <person name="Frings S."/>
            <person name="Yau K.W."/>
            <person name="Reed R."/>
        </authorList>
    </citation>
    <scope>NOMENCLATURE</scope>
</reference>
<reference key="5">
    <citation type="journal article" date="2003" name="J. Biol. Chem.">
        <title>Achromatopsia-associated mutation in the human cone photoreceptor cyclic nucleotide-gated channel CNGB3 subunit alters the ligand sensitivity and pore properties of heteromeric channels.</title>
        <authorList>
            <person name="Peng C."/>
            <person name="Rich E.D."/>
            <person name="Varnum M.D."/>
        </authorList>
    </citation>
    <scope>FUNCTION</scope>
    <scope>TRANSPORTER ACTIVITY</scope>
    <scope>CHARACTERIZATION OF VARIANT ACHM3 PHE-435</scope>
</reference>
<reference key="6">
    <citation type="journal article" date="2011" name="Nat. Commun.">
        <title>Molecular mechanism for 3:1 subunit stoichiometry of rod cyclic nucleotide-gated ion channels.</title>
        <authorList>
            <person name="Shuart N.G."/>
            <person name="Haitin Y."/>
            <person name="Camp S.S."/>
            <person name="Black K.D."/>
            <person name="Zagotta W.N."/>
        </authorList>
    </citation>
    <scope>SUBUNIT</scope>
</reference>
<reference key="7">
    <citation type="journal article" date="2022" name="Nat. Struct. Mol. Biol.">
        <title>Structure of the human cone photoreceptor cyclic nucleotide-gated channel.</title>
        <authorList>
            <person name="Zheng X."/>
            <person name="Hu Z."/>
            <person name="Li H."/>
            <person name="Yang J."/>
        </authorList>
    </citation>
    <scope>STRUCTURE BY ELECTRON MICROSCOPY (2.93 ANGSTROMS) OF 2-809</scope>
    <scope>FUNCTION</scope>
    <scope>SUBUNIT</scope>
    <scope>SITE</scope>
    <scope>DOMAIN</scope>
</reference>
<reference key="8">
    <citation type="journal article" date="2023" name="Nat. Commun.">
        <title>Conformational trajectory of allosteric gating of the human cone photoreceptor cyclic nucleotide-gated channel.</title>
        <authorList>
            <person name="Hu Z."/>
            <person name="Zheng X."/>
            <person name="Yang J."/>
        </authorList>
    </citation>
    <scope>STRUCTURE BY ELECTRON MICROSCOPY (3.11 ANGSTROMS) OF 79-809 IN COMPLEX WITH 3',5'-CYCLIC GMP</scope>
    <scope>FUNCTION</scope>
    <scope>SUBUNIT</scope>
</reference>
<reference key="9">
    <citation type="journal article" date="2002" name="Eur. J. Hum. Genet.">
        <title>A frameshift insertion in the cone cyclic nucleotide gated cation channel causes complete achromatopsia in a consanguineous family from a rural isolate.</title>
        <authorList>
            <person name="Rojas C.V."/>
            <person name="Maria L.S."/>
            <person name="Santos J.L."/>
            <person name="Cortes F."/>
            <person name="Alliende M.A."/>
        </authorList>
    </citation>
    <scope>VARIANT ACHM3 GLU-148</scope>
</reference>
<reference key="10">
    <citation type="journal article" date="2004" name="J. Med. Genet.">
        <title>Achromatopsia caused by novel mutations in both CNGA3 and CNGB3.</title>
        <authorList>
            <person name="Johnson S."/>
            <person name="Michaelides M."/>
            <person name="Aligianis I.A."/>
            <person name="Ainsworth J.R."/>
            <person name="Mollon J.D."/>
            <person name="Maher E.R."/>
            <person name="Moore A.T."/>
            <person name="Hunt D.M."/>
        </authorList>
    </citation>
    <scope>VARIANTS ACHM3 VAL-307 AND ASN-525</scope>
</reference>
<reference key="11">
    <citation type="journal article" date="2005" name="Eur. J. Hum. Genet.">
        <title>CNGB3 mutations account for 50% of all cases with autosomal recessive achromatopsia.</title>
        <authorList>
            <person name="Kohl S."/>
            <person name="Varsanyi B."/>
            <person name="Antunes G.A."/>
            <person name="Baumann B."/>
            <person name="Hoyng C.B."/>
            <person name="Jaegle H."/>
            <person name="Rosenberg T."/>
            <person name="Kellner U."/>
            <person name="Lorenz B."/>
            <person name="Salati R."/>
            <person name="Jurklies B."/>
            <person name="Farkas A."/>
            <person name="Andreasson S."/>
            <person name="Weleber R.G."/>
            <person name="Jacobson S.G."/>
            <person name="Rudolph G."/>
            <person name="Castellan C."/>
            <person name="Dollfus H."/>
            <person name="Legius E."/>
            <person name="Anastasi M."/>
            <person name="Bitoun P."/>
            <person name="Lev D."/>
            <person name="Sieving P.A."/>
            <person name="Munier F.L."/>
            <person name="Zrenner E."/>
            <person name="Sharpe L.T."/>
            <person name="Cremers F.P.M."/>
            <person name="Wissinger B."/>
        </authorList>
    </citation>
    <scope>VARIANTS ACHM3 PHE-156; LEU-309; PHE-435 AND 720-GLN--LYS-726 DEL</scope>
</reference>
<reference key="12">
    <citation type="journal article" date="2005" name="Hum. Mutat.">
        <title>Cone cGMP-gated channel mutations and clinical findings in patients with achromatopsia, macular degeneration, and other hereditary cone diseases.</title>
        <authorList>
            <person name="Nishiguchi K.M."/>
            <person name="Sandberg M.A."/>
            <person name="Gorji N."/>
            <person name="Berson E.L."/>
            <person name="Dryja T.P."/>
        </authorList>
    </citation>
    <scope>VARIANT MACULAR DEGENERATION GLN-403</scope>
    <scope>VARIANT STGD1 ASP-469</scope>
    <scope>VARIANTS ACHM3 ARG-107; LYS-199; THR-466; ASN-494; TYR-513; CYS-558; PHE-595 AND PRO-672</scope>
    <scope>VARIANTS HIS-25; SER-27; GLN-203; PRO-298; VAL-307 AND GLY-755</scope>
</reference>
<dbReference type="EMBL" id="AF272900">
    <property type="protein sequence ID" value="AAF86274.1"/>
    <property type="molecule type" value="mRNA"/>
</dbReference>
<dbReference type="EMBL" id="AC013751">
    <property type="status" value="NOT_ANNOTATED_CDS"/>
    <property type="molecule type" value="Genomic_DNA"/>
</dbReference>
<dbReference type="EMBL" id="AC090572">
    <property type="status" value="NOT_ANNOTATED_CDS"/>
    <property type="molecule type" value="Genomic_DNA"/>
</dbReference>
<dbReference type="EMBL" id="AF228520">
    <property type="protein sequence ID" value="AAF80179.1"/>
    <property type="status" value="ALT_INIT"/>
    <property type="molecule type" value="mRNA"/>
</dbReference>
<dbReference type="CCDS" id="CCDS6244.1">
    <molecule id="Q9NQW8-1"/>
</dbReference>
<dbReference type="RefSeq" id="NP_061971.3">
    <molecule id="Q9NQW8-1"/>
    <property type="nucleotide sequence ID" value="NM_019098.4"/>
</dbReference>
<dbReference type="PDB" id="7RHS">
    <property type="method" value="EM"/>
    <property type="resolution" value="2.93 A"/>
    <property type="chains" value="D=2-809"/>
</dbReference>
<dbReference type="PDB" id="8ETP">
    <property type="method" value="EM"/>
    <property type="resolution" value="3.52 A"/>
    <property type="chains" value="D=1-809"/>
</dbReference>
<dbReference type="PDB" id="8EU3">
    <property type="method" value="EM"/>
    <property type="resolution" value="3.62 A"/>
    <property type="chains" value="D=1-809"/>
</dbReference>
<dbReference type="PDB" id="8EUC">
    <property type="method" value="EM"/>
    <property type="resolution" value="3.61 A"/>
    <property type="chains" value="D=1-809"/>
</dbReference>
<dbReference type="PDB" id="8EV8">
    <property type="method" value="EM"/>
    <property type="resolution" value="3.11 A"/>
    <property type="chains" value="D=79-809"/>
</dbReference>
<dbReference type="PDB" id="8EV9">
    <property type="method" value="EM"/>
    <property type="resolution" value="3.33 A"/>
    <property type="chains" value="D=79-809"/>
</dbReference>
<dbReference type="PDB" id="8EVA">
    <property type="method" value="EM"/>
    <property type="resolution" value="3.33 A"/>
    <property type="chains" value="D=79-809"/>
</dbReference>
<dbReference type="PDB" id="8EVB">
    <property type="method" value="EM"/>
    <property type="resolution" value="3.60 A"/>
    <property type="chains" value="D=79-809"/>
</dbReference>
<dbReference type="PDB" id="8EVC">
    <property type="method" value="EM"/>
    <property type="resolution" value="3.33 A"/>
    <property type="chains" value="D=79-809"/>
</dbReference>
<dbReference type="PDBsum" id="7RHS"/>
<dbReference type="PDBsum" id="8ETP"/>
<dbReference type="PDBsum" id="8EU3"/>
<dbReference type="PDBsum" id="8EUC"/>
<dbReference type="PDBsum" id="8EV8"/>
<dbReference type="PDBsum" id="8EV9"/>
<dbReference type="PDBsum" id="8EVA"/>
<dbReference type="PDBsum" id="8EVB"/>
<dbReference type="PDBsum" id="8EVC"/>
<dbReference type="EMDB" id="EMD-24468"/>
<dbReference type="EMDB" id="EMD-28595"/>
<dbReference type="EMDB" id="EMD-28603"/>
<dbReference type="EMDB" id="EMD-28611"/>
<dbReference type="EMDB" id="EMD-28622"/>
<dbReference type="EMDB" id="EMD-28623"/>
<dbReference type="EMDB" id="EMD-28624"/>
<dbReference type="EMDB" id="EMD-28625"/>
<dbReference type="EMDB" id="EMD-28626"/>
<dbReference type="SMR" id="Q9NQW8"/>
<dbReference type="BioGRID" id="120106">
    <property type="interactions" value="7"/>
</dbReference>
<dbReference type="CORUM" id="Q9NQW8"/>
<dbReference type="FunCoup" id="Q9NQW8">
    <property type="interactions" value="319"/>
</dbReference>
<dbReference type="IntAct" id="Q9NQW8">
    <property type="interactions" value="2"/>
</dbReference>
<dbReference type="MINT" id="Q9NQW8"/>
<dbReference type="STRING" id="9606.ENSP00000316605"/>
<dbReference type="TCDB" id="1.A.1.5.37">
    <property type="family name" value="the voltage-gated ion channel (vic) superfamily"/>
</dbReference>
<dbReference type="GlyCosmos" id="Q9NQW8">
    <property type="glycosylation" value="1 site, No reported glycans"/>
</dbReference>
<dbReference type="GlyGen" id="Q9NQW8">
    <property type="glycosylation" value="1 site"/>
</dbReference>
<dbReference type="iPTMnet" id="Q9NQW8"/>
<dbReference type="PhosphoSitePlus" id="Q9NQW8"/>
<dbReference type="BioMuta" id="CNGB3"/>
<dbReference type="DMDM" id="311033366"/>
<dbReference type="jPOST" id="Q9NQW8"/>
<dbReference type="MassIVE" id="Q9NQW8"/>
<dbReference type="PaxDb" id="9606-ENSP00000316605"/>
<dbReference type="PeptideAtlas" id="Q9NQW8"/>
<dbReference type="ProteomicsDB" id="82213">
    <molecule id="Q9NQW8-1"/>
</dbReference>
<dbReference type="ProteomicsDB" id="82214">
    <molecule id="Q9NQW8-2"/>
</dbReference>
<dbReference type="Antibodypedia" id="59091">
    <property type="antibodies" value="113 antibodies from 24 providers"/>
</dbReference>
<dbReference type="DNASU" id="54714"/>
<dbReference type="Ensembl" id="ENST00000320005.6">
    <molecule id="Q9NQW8-1"/>
    <property type="protein sequence ID" value="ENSP00000316605.5"/>
    <property type="gene ID" value="ENSG00000170289.13"/>
</dbReference>
<dbReference type="GeneID" id="54714"/>
<dbReference type="KEGG" id="hsa:54714"/>
<dbReference type="MANE-Select" id="ENST00000320005.6">
    <property type="protein sequence ID" value="ENSP00000316605.5"/>
    <property type="RefSeq nucleotide sequence ID" value="NM_019098.5"/>
    <property type="RefSeq protein sequence ID" value="NP_061971.3"/>
</dbReference>
<dbReference type="UCSC" id="uc003ydx.3">
    <molecule id="Q9NQW8-1"/>
    <property type="organism name" value="human"/>
</dbReference>
<dbReference type="AGR" id="HGNC:2153"/>
<dbReference type="CTD" id="54714"/>
<dbReference type="DisGeNET" id="54714"/>
<dbReference type="GeneCards" id="CNGB3"/>
<dbReference type="GeneReviews" id="CNGB3"/>
<dbReference type="HGNC" id="HGNC:2153">
    <property type="gene designation" value="CNGB3"/>
</dbReference>
<dbReference type="HPA" id="ENSG00000170289">
    <property type="expression patterns" value="Tissue enhanced (bone marrow, retina)"/>
</dbReference>
<dbReference type="MalaCards" id="CNGB3"/>
<dbReference type="MIM" id="248200">
    <property type="type" value="phenotype"/>
</dbReference>
<dbReference type="MIM" id="262300">
    <property type="type" value="phenotype"/>
</dbReference>
<dbReference type="MIM" id="605080">
    <property type="type" value="gene"/>
</dbReference>
<dbReference type="neXtProt" id="NX_Q9NQW8"/>
<dbReference type="OpenTargets" id="ENSG00000170289"/>
<dbReference type="Orphanet" id="49382">
    <property type="disease" value="Achromatopsia"/>
</dbReference>
<dbReference type="Orphanet" id="1871">
    <property type="disease" value="Progressive cone dystrophy"/>
</dbReference>
<dbReference type="Orphanet" id="827">
    <property type="disease" value="Stargardt disease"/>
</dbReference>
<dbReference type="PharmGKB" id="PA26663"/>
<dbReference type="VEuPathDB" id="HostDB:ENSG00000170289"/>
<dbReference type="eggNOG" id="KOG0499">
    <property type="taxonomic scope" value="Eukaryota"/>
</dbReference>
<dbReference type="GeneTree" id="ENSGT00940000154824"/>
<dbReference type="HOGENOM" id="CLU_005746_11_1_1"/>
<dbReference type="InParanoid" id="Q9NQW8"/>
<dbReference type="OMA" id="FRVCMDH"/>
<dbReference type="OrthoDB" id="421226at2759"/>
<dbReference type="PAN-GO" id="Q9NQW8">
    <property type="GO annotations" value="8 GO annotations based on evolutionary models"/>
</dbReference>
<dbReference type="PhylomeDB" id="Q9NQW8"/>
<dbReference type="TreeFam" id="TF318250"/>
<dbReference type="PathwayCommons" id="Q9NQW8"/>
<dbReference type="SignaLink" id="Q9NQW8"/>
<dbReference type="BioGRID-ORCS" id="54714">
    <property type="hits" value="10 hits in 1138 CRISPR screens"/>
</dbReference>
<dbReference type="ChiTaRS" id="CNGB3">
    <property type="organism name" value="human"/>
</dbReference>
<dbReference type="GeneWiki" id="Cyclic_nucleotide_gated_channel_beta_3"/>
<dbReference type="GenomeRNAi" id="54714"/>
<dbReference type="Pharos" id="Q9NQW8">
    <property type="development level" value="Tchem"/>
</dbReference>
<dbReference type="PRO" id="PR:Q9NQW8"/>
<dbReference type="Proteomes" id="UP000005640">
    <property type="component" value="Chromosome 8"/>
</dbReference>
<dbReference type="RNAct" id="Q9NQW8">
    <property type="molecule type" value="protein"/>
</dbReference>
<dbReference type="Bgee" id="ENSG00000170289">
    <property type="expression patterns" value="Expressed in male germ line stem cell (sensu Vertebrata) in testis and 128 other cell types or tissues"/>
</dbReference>
<dbReference type="ExpressionAtlas" id="Q9NQW8">
    <property type="expression patterns" value="baseline and differential"/>
</dbReference>
<dbReference type="GO" id="GO:0017071">
    <property type="term" value="C:intracellular cyclic nucleotide activated cation channel complex"/>
    <property type="evidence" value="ECO:0000318"/>
    <property type="project" value="GO_Central"/>
</dbReference>
<dbReference type="GO" id="GO:0001750">
    <property type="term" value="C:photoreceptor outer segment"/>
    <property type="evidence" value="ECO:0000318"/>
    <property type="project" value="GO_Central"/>
</dbReference>
<dbReference type="GO" id="GO:0005886">
    <property type="term" value="C:plasma membrane"/>
    <property type="evidence" value="ECO:0000314"/>
    <property type="project" value="UniProtKB"/>
</dbReference>
<dbReference type="GO" id="GO:1902495">
    <property type="term" value="C:transmembrane transporter complex"/>
    <property type="evidence" value="ECO:0000314"/>
    <property type="project" value="UniProtKB"/>
</dbReference>
<dbReference type="GO" id="GO:0030553">
    <property type="term" value="F:cGMP binding"/>
    <property type="evidence" value="ECO:0000314"/>
    <property type="project" value="UniProtKB"/>
</dbReference>
<dbReference type="GO" id="GO:0005222">
    <property type="term" value="F:intracellularly cAMP-activated cation channel activity"/>
    <property type="evidence" value="ECO:0000314"/>
    <property type="project" value="UniProtKB"/>
</dbReference>
<dbReference type="GO" id="GO:0005223">
    <property type="term" value="F:intracellularly cGMP-activated cation channel activity"/>
    <property type="evidence" value="ECO:0000314"/>
    <property type="project" value="UniProtKB"/>
</dbReference>
<dbReference type="GO" id="GO:0044877">
    <property type="term" value="F:protein-containing complex binding"/>
    <property type="evidence" value="ECO:0000318"/>
    <property type="project" value="GO_Central"/>
</dbReference>
<dbReference type="GO" id="GO:0098655">
    <property type="term" value="P:monoatomic cation transmembrane transport"/>
    <property type="evidence" value="ECO:0000318"/>
    <property type="project" value="GO_Central"/>
</dbReference>
<dbReference type="GO" id="GO:0006812">
    <property type="term" value="P:monoatomic cation transport"/>
    <property type="evidence" value="ECO:0000314"/>
    <property type="project" value="UniProtKB"/>
</dbReference>
<dbReference type="GO" id="GO:0007165">
    <property type="term" value="P:signal transduction"/>
    <property type="evidence" value="ECO:0000303"/>
    <property type="project" value="ProtInc"/>
</dbReference>
<dbReference type="GO" id="GO:0007601">
    <property type="term" value="P:visual perception"/>
    <property type="evidence" value="ECO:0000304"/>
    <property type="project" value="ProtInc"/>
</dbReference>
<dbReference type="CDD" id="cd00038">
    <property type="entry name" value="CAP_ED"/>
    <property type="match status" value="1"/>
</dbReference>
<dbReference type="FunFam" id="1.10.287.70:FF:000072">
    <property type="entry name" value="Cyclic nucleotide gated channel beta 3"/>
    <property type="match status" value="1"/>
</dbReference>
<dbReference type="FunFam" id="1.10.287.630:FF:000001">
    <property type="entry name" value="Cyclic nucleotide-gated channel alpha 3"/>
    <property type="match status" value="1"/>
</dbReference>
<dbReference type="FunFam" id="2.60.120.10:FF:000020">
    <property type="entry name" value="Cyclic nucleotide-gated channel beta 3"/>
    <property type="match status" value="1"/>
</dbReference>
<dbReference type="Gene3D" id="1.10.287.70">
    <property type="match status" value="1"/>
</dbReference>
<dbReference type="Gene3D" id="1.10.287.630">
    <property type="entry name" value="Helix hairpin bin"/>
    <property type="match status" value="1"/>
</dbReference>
<dbReference type="Gene3D" id="2.60.120.10">
    <property type="entry name" value="Jelly Rolls"/>
    <property type="match status" value="1"/>
</dbReference>
<dbReference type="InterPro" id="IPR050866">
    <property type="entry name" value="CNG_cation_channel"/>
</dbReference>
<dbReference type="InterPro" id="IPR018488">
    <property type="entry name" value="cNMP-bd_CS"/>
</dbReference>
<dbReference type="InterPro" id="IPR000595">
    <property type="entry name" value="cNMP-bd_dom"/>
</dbReference>
<dbReference type="InterPro" id="IPR018490">
    <property type="entry name" value="cNMP-bd_dom_sf"/>
</dbReference>
<dbReference type="InterPro" id="IPR005821">
    <property type="entry name" value="Ion_trans_dom"/>
</dbReference>
<dbReference type="InterPro" id="IPR014710">
    <property type="entry name" value="RmlC-like_jellyroll"/>
</dbReference>
<dbReference type="PANTHER" id="PTHR45638:SF8">
    <property type="entry name" value="CYCLIC NUCLEOTIDE-GATED CATION CHANNEL BETA-3"/>
    <property type="match status" value="1"/>
</dbReference>
<dbReference type="PANTHER" id="PTHR45638">
    <property type="entry name" value="CYCLIC NUCLEOTIDE-GATED CATION CHANNEL SUBUNIT A"/>
    <property type="match status" value="1"/>
</dbReference>
<dbReference type="Pfam" id="PF00027">
    <property type="entry name" value="cNMP_binding"/>
    <property type="match status" value="1"/>
</dbReference>
<dbReference type="Pfam" id="PF00520">
    <property type="entry name" value="Ion_trans"/>
    <property type="match status" value="1"/>
</dbReference>
<dbReference type="SMART" id="SM00100">
    <property type="entry name" value="cNMP"/>
    <property type="match status" value="1"/>
</dbReference>
<dbReference type="SUPFAM" id="SSF51206">
    <property type="entry name" value="cAMP-binding domain-like"/>
    <property type="match status" value="1"/>
</dbReference>
<dbReference type="SUPFAM" id="SSF81324">
    <property type="entry name" value="Voltage-gated potassium channels"/>
    <property type="match status" value="1"/>
</dbReference>
<dbReference type="PROSITE" id="PS00888">
    <property type="entry name" value="CNMP_BINDING_1"/>
    <property type="match status" value="1"/>
</dbReference>
<dbReference type="PROSITE" id="PS00889">
    <property type="entry name" value="CNMP_BINDING_2"/>
    <property type="match status" value="1"/>
</dbReference>
<dbReference type="PROSITE" id="PS50042">
    <property type="entry name" value="CNMP_BINDING_3"/>
    <property type="match status" value="1"/>
</dbReference>
<organism>
    <name type="scientific">Homo sapiens</name>
    <name type="common">Human</name>
    <dbReference type="NCBI Taxonomy" id="9606"/>
    <lineage>
        <taxon>Eukaryota</taxon>
        <taxon>Metazoa</taxon>
        <taxon>Chordata</taxon>
        <taxon>Craniata</taxon>
        <taxon>Vertebrata</taxon>
        <taxon>Euteleostomi</taxon>
        <taxon>Mammalia</taxon>
        <taxon>Eutheria</taxon>
        <taxon>Euarchontoglires</taxon>
        <taxon>Primates</taxon>
        <taxon>Haplorrhini</taxon>
        <taxon>Catarrhini</taxon>
        <taxon>Hominidae</taxon>
        <taxon>Homo</taxon>
    </lineage>
</organism>
<gene>
    <name evidence="15" type="primary">CNGB3</name>
</gene>